<feature type="chain" id="PRO_1000131275" description="PqqA peptide cyclase">
    <location>
        <begin position="1"/>
        <end position="382"/>
    </location>
</feature>
<feature type="domain" description="Radical SAM core" evidence="2">
    <location>
        <begin position="8"/>
        <end position="223"/>
    </location>
</feature>
<feature type="binding site" evidence="1">
    <location>
        <position position="22"/>
    </location>
    <ligand>
        <name>[4Fe-4S] cluster</name>
        <dbReference type="ChEBI" id="CHEBI:49883"/>
        <note>4Fe-4S-S-AdoMet</note>
    </ligand>
</feature>
<feature type="binding site" evidence="1">
    <location>
        <position position="26"/>
    </location>
    <ligand>
        <name>[4Fe-4S] cluster</name>
        <dbReference type="ChEBI" id="CHEBI:49883"/>
        <note>4Fe-4S-S-AdoMet</note>
    </ligand>
</feature>
<feature type="binding site" evidence="1">
    <location>
        <position position="29"/>
    </location>
    <ligand>
        <name>[4Fe-4S] cluster</name>
        <dbReference type="ChEBI" id="CHEBI:49883"/>
        <note>4Fe-4S-S-AdoMet</note>
    </ligand>
</feature>
<proteinExistence type="inferred from homology"/>
<dbReference type="EC" id="1.21.98.4" evidence="1"/>
<dbReference type="EMBL" id="CU468135">
    <property type="protein sequence ID" value="CAO97932.1"/>
    <property type="molecule type" value="Genomic_DNA"/>
</dbReference>
<dbReference type="RefSeq" id="WP_012442587.1">
    <property type="nucleotide sequence ID" value="NC_010694.1"/>
</dbReference>
<dbReference type="SMR" id="B2VL10"/>
<dbReference type="STRING" id="465817.ETA_28860"/>
<dbReference type="KEGG" id="eta:ETA_28860"/>
<dbReference type="eggNOG" id="COG0535">
    <property type="taxonomic scope" value="Bacteria"/>
</dbReference>
<dbReference type="HOGENOM" id="CLU_009273_4_7_6"/>
<dbReference type="OrthoDB" id="9792276at2"/>
<dbReference type="UniPathway" id="UPA00539"/>
<dbReference type="Proteomes" id="UP000001726">
    <property type="component" value="Chromosome"/>
</dbReference>
<dbReference type="GO" id="GO:0051539">
    <property type="term" value="F:4 iron, 4 sulfur cluster binding"/>
    <property type="evidence" value="ECO:0007669"/>
    <property type="project" value="UniProtKB-KW"/>
</dbReference>
<dbReference type="GO" id="GO:0009975">
    <property type="term" value="F:cyclase activity"/>
    <property type="evidence" value="ECO:0007669"/>
    <property type="project" value="UniProtKB-UniRule"/>
</dbReference>
<dbReference type="GO" id="GO:0005506">
    <property type="term" value="F:iron ion binding"/>
    <property type="evidence" value="ECO:0007669"/>
    <property type="project" value="UniProtKB-UniRule"/>
</dbReference>
<dbReference type="GO" id="GO:0016491">
    <property type="term" value="F:oxidoreductase activity"/>
    <property type="evidence" value="ECO:0007669"/>
    <property type="project" value="UniProtKB-KW"/>
</dbReference>
<dbReference type="GO" id="GO:1904047">
    <property type="term" value="F:S-adenosyl-L-methionine binding"/>
    <property type="evidence" value="ECO:0007669"/>
    <property type="project" value="UniProtKB-UniRule"/>
</dbReference>
<dbReference type="GO" id="GO:0018189">
    <property type="term" value="P:pyrroloquinoline quinone biosynthetic process"/>
    <property type="evidence" value="ECO:0007669"/>
    <property type="project" value="UniProtKB-UniRule"/>
</dbReference>
<dbReference type="CDD" id="cd01335">
    <property type="entry name" value="Radical_SAM"/>
    <property type="match status" value="1"/>
</dbReference>
<dbReference type="CDD" id="cd21119">
    <property type="entry name" value="SPASM_PqqE"/>
    <property type="match status" value="1"/>
</dbReference>
<dbReference type="Gene3D" id="3.20.20.70">
    <property type="entry name" value="Aldolase class I"/>
    <property type="match status" value="1"/>
</dbReference>
<dbReference type="HAMAP" id="MF_00660">
    <property type="entry name" value="PqqE"/>
    <property type="match status" value="1"/>
</dbReference>
<dbReference type="InterPro" id="IPR023885">
    <property type="entry name" value="4Fe4S-binding_SPASM_dom"/>
</dbReference>
<dbReference type="InterPro" id="IPR013785">
    <property type="entry name" value="Aldolase_TIM"/>
</dbReference>
<dbReference type="InterPro" id="IPR006638">
    <property type="entry name" value="Elp3/MiaA/NifB-like_rSAM"/>
</dbReference>
<dbReference type="InterPro" id="IPR000385">
    <property type="entry name" value="MoaA_NifB_PqqE_Fe-S-bd_CS"/>
</dbReference>
<dbReference type="InterPro" id="IPR011843">
    <property type="entry name" value="PQQ_synth_PqqE_bac"/>
</dbReference>
<dbReference type="InterPro" id="IPR017200">
    <property type="entry name" value="PqqE-like"/>
</dbReference>
<dbReference type="InterPro" id="IPR050377">
    <property type="entry name" value="Radical_SAM_PqqE_MftC-like"/>
</dbReference>
<dbReference type="InterPro" id="IPR007197">
    <property type="entry name" value="rSAM"/>
</dbReference>
<dbReference type="NCBIfam" id="TIGR02109">
    <property type="entry name" value="PQQ_syn_pqqE"/>
    <property type="match status" value="1"/>
</dbReference>
<dbReference type="PANTHER" id="PTHR11228:SF7">
    <property type="entry name" value="PQQA PEPTIDE CYCLASE"/>
    <property type="match status" value="1"/>
</dbReference>
<dbReference type="PANTHER" id="PTHR11228">
    <property type="entry name" value="RADICAL SAM DOMAIN PROTEIN"/>
    <property type="match status" value="1"/>
</dbReference>
<dbReference type="Pfam" id="PF13353">
    <property type="entry name" value="Fer4_12"/>
    <property type="match status" value="1"/>
</dbReference>
<dbReference type="Pfam" id="PF04055">
    <property type="entry name" value="Radical_SAM"/>
    <property type="match status" value="1"/>
</dbReference>
<dbReference type="Pfam" id="PF13186">
    <property type="entry name" value="SPASM"/>
    <property type="match status" value="1"/>
</dbReference>
<dbReference type="PIRSF" id="PIRSF037420">
    <property type="entry name" value="PQQ_syn_pqqE"/>
    <property type="match status" value="1"/>
</dbReference>
<dbReference type="SFLD" id="SFLDF00280">
    <property type="entry name" value="coenzyme_PQQ_synthesis_protein"/>
    <property type="match status" value="1"/>
</dbReference>
<dbReference type="SFLD" id="SFLDG01067">
    <property type="entry name" value="SPASM/twitch_domain_containing"/>
    <property type="match status" value="1"/>
</dbReference>
<dbReference type="SMART" id="SM00729">
    <property type="entry name" value="Elp3"/>
    <property type="match status" value="1"/>
</dbReference>
<dbReference type="SUPFAM" id="SSF102114">
    <property type="entry name" value="Radical SAM enzymes"/>
    <property type="match status" value="1"/>
</dbReference>
<dbReference type="PROSITE" id="PS01305">
    <property type="entry name" value="MOAA_NIFB_PQQE"/>
    <property type="match status" value="1"/>
</dbReference>
<dbReference type="PROSITE" id="PS51918">
    <property type="entry name" value="RADICAL_SAM"/>
    <property type="match status" value="1"/>
</dbReference>
<organism>
    <name type="scientific">Erwinia tasmaniensis (strain DSM 17950 / CFBP 7177 / CIP 109463 / NCPPB 4357 / Et1/99)</name>
    <dbReference type="NCBI Taxonomy" id="465817"/>
    <lineage>
        <taxon>Bacteria</taxon>
        <taxon>Pseudomonadati</taxon>
        <taxon>Pseudomonadota</taxon>
        <taxon>Gammaproteobacteria</taxon>
        <taxon>Enterobacterales</taxon>
        <taxon>Erwiniaceae</taxon>
        <taxon>Erwinia</taxon>
    </lineage>
</organism>
<name>PQQE_ERWT9</name>
<gene>
    <name evidence="1" type="primary">pqqE</name>
    <name type="ordered locus">ETA_28860</name>
</gene>
<comment type="function">
    <text evidence="1">Catalyzes the cross-linking of a glutamate residue and a tyrosine residue in the PqqA protein as part of the biosynthesis of pyrroloquinoline quinone (PQQ).</text>
</comment>
<comment type="catalytic activity">
    <reaction evidence="1">
        <text>[PQQ precursor protein] + S-adenosyl-L-methionine = E-Y cross-linked-[PQQ precursor protein] + 5'-deoxyadenosine + L-methionine + H(+)</text>
        <dbReference type="Rhea" id="RHEA:56836"/>
        <dbReference type="Rhea" id="RHEA-COMP:14800"/>
        <dbReference type="Rhea" id="RHEA-COMP:14801"/>
        <dbReference type="ChEBI" id="CHEBI:15378"/>
        <dbReference type="ChEBI" id="CHEBI:17319"/>
        <dbReference type="ChEBI" id="CHEBI:57844"/>
        <dbReference type="ChEBI" id="CHEBI:59789"/>
        <dbReference type="ChEBI" id="CHEBI:141026"/>
        <dbReference type="ChEBI" id="CHEBI:141027"/>
        <dbReference type="EC" id="1.21.98.4"/>
    </reaction>
</comment>
<comment type="cofactor">
    <cofactor evidence="1">
        <name>[4Fe-4S] cluster</name>
        <dbReference type="ChEBI" id="CHEBI:49883"/>
    </cofactor>
    <text evidence="1">Binds 1 [4Fe-4S] cluster. The cluster is coordinated with 3 cysteines and an exchangeable S-adenosyl-L-methionine.</text>
</comment>
<comment type="pathway">
    <text evidence="1">Cofactor biosynthesis; pyrroloquinoline quinone biosynthesis.</text>
</comment>
<comment type="subunit">
    <text evidence="1">Interacts with PqqD. The interaction is necessary for activity of PqqE.</text>
</comment>
<comment type="similarity">
    <text evidence="1">Belongs to the radical SAM superfamily. PqqE family.</text>
</comment>
<protein>
    <recommendedName>
        <fullName evidence="1">PqqA peptide cyclase</fullName>
        <ecNumber evidence="1">1.21.98.4</ecNumber>
    </recommendedName>
    <alternativeName>
        <fullName evidence="1">Coenzyme PQQ synthesis protein E</fullName>
    </alternativeName>
    <alternativeName>
        <fullName evidence="1">Pyrroloquinoline quinone biosynthesis protein E</fullName>
    </alternativeName>
</protein>
<evidence type="ECO:0000255" key="1">
    <source>
        <dbReference type="HAMAP-Rule" id="MF_00660"/>
    </source>
</evidence>
<evidence type="ECO:0000255" key="2">
    <source>
        <dbReference type="PROSITE-ProRule" id="PRU01266"/>
    </source>
</evidence>
<sequence length="382" mass="43040">MNPSESNVKPPLWLLAELTYRCPLQCPYCSNPLDFAQQEKELSTAQWIEVFKQARAMGAVQIGFSGGEPLVRKDLPELIRSARELGFYTNLITSGIGLTQKKIDAFAEAGLDHIQISFQASDETLNAALAGSQKAFQQKLEMARAVKAHGYPMVLNFVLHRHNIDQLDRIIELCIELEADDVELATCQFYGWAQLNREGLLPTRDQLVRAEAVVHRYREKMAASGNLANLLFVTPDYYEERPKGCMGGWGAIFLSVTPEGMALPCHSARQLPIRFPSVLEHSLQDIWFNSFGFNRYRGFDWMPEPCRSCDEKEKDFGGCRCQAFMLTGNADNADPVCSKSEHHGTILAAREQANCTNIQVNQLRFRNRANSERVNSQLIFKG</sequence>
<keyword id="KW-0004">4Fe-4S</keyword>
<keyword id="KW-0408">Iron</keyword>
<keyword id="KW-0411">Iron-sulfur</keyword>
<keyword id="KW-0479">Metal-binding</keyword>
<keyword id="KW-0560">Oxidoreductase</keyword>
<keyword id="KW-0884">PQQ biosynthesis</keyword>
<keyword id="KW-1185">Reference proteome</keyword>
<keyword id="KW-0949">S-adenosyl-L-methionine</keyword>
<accession>B2VL10</accession>
<reference key="1">
    <citation type="journal article" date="2008" name="Environ. Microbiol.">
        <title>The genome of Erwinia tasmaniensis strain Et1/99, a non-pathogenic bacterium in the genus Erwinia.</title>
        <authorList>
            <person name="Kube M."/>
            <person name="Migdoll A.M."/>
            <person name="Mueller I."/>
            <person name="Kuhl H."/>
            <person name="Beck A."/>
            <person name="Reinhardt R."/>
            <person name="Geider K."/>
        </authorList>
    </citation>
    <scope>NUCLEOTIDE SEQUENCE [LARGE SCALE GENOMIC DNA]</scope>
    <source>
        <strain>DSM 17950 / CFBP 7177 / CIP 109463 / NCPPB 4357 / Et1/99</strain>
    </source>
</reference>